<proteinExistence type="inferred from homology"/>
<gene>
    <name evidence="1" type="primary">lgt</name>
    <name type="ordered locus">SPG_1353</name>
</gene>
<accession>B5E5S0</accession>
<sequence length="262" mass="30259">MLDPIAIQLGPLAIRWYALCIVTGLILAVYLTMKEAPRKKIIPDDILDFILVAFPLAILGARLYYVIFRFDYYSQNLGEIFAIWNGGLAIYGGLITGALVLYIFADRKLINTWDFLDIAAPSVMIAQSLGRWGNFFNQEAYGATVDNLDYLPGFIRDQMYIEGSYRQPTFLYESLWNLLGFALILIFRRKWKSLRRGHITAFYLIWYGFGRMVIEGMRTDSLMFFGLRVSQWLSVVLIGLGIMIVIYQNRKKAPYYITEEEN</sequence>
<keyword id="KW-1003">Cell membrane</keyword>
<keyword id="KW-0472">Membrane</keyword>
<keyword id="KW-0808">Transferase</keyword>
<keyword id="KW-0812">Transmembrane</keyword>
<keyword id="KW-1133">Transmembrane helix</keyword>
<protein>
    <recommendedName>
        <fullName evidence="1">Phosphatidylglycerol--prolipoprotein diacylglyceryl transferase</fullName>
        <ecNumber evidence="1">2.5.1.145</ecNumber>
    </recommendedName>
</protein>
<comment type="function">
    <text evidence="1">Catalyzes the transfer of the diacylglyceryl group from phosphatidylglycerol to the sulfhydryl group of the N-terminal cysteine of a prolipoprotein, the first step in the formation of mature lipoproteins.</text>
</comment>
<comment type="catalytic activity">
    <reaction evidence="1">
        <text>L-cysteinyl-[prolipoprotein] + a 1,2-diacyl-sn-glycero-3-phospho-(1'-sn-glycerol) = an S-1,2-diacyl-sn-glyceryl-L-cysteinyl-[prolipoprotein] + sn-glycerol 1-phosphate + H(+)</text>
        <dbReference type="Rhea" id="RHEA:56712"/>
        <dbReference type="Rhea" id="RHEA-COMP:14679"/>
        <dbReference type="Rhea" id="RHEA-COMP:14680"/>
        <dbReference type="ChEBI" id="CHEBI:15378"/>
        <dbReference type="ChEBI" id="CHEBI:29950"/>
        <dbReference type="ChEBI" id="CHEBI:57685"/>
        <dbReference type="ChEBI" id="CHEBI:64716"/>
        <dbReference type="ChEBI" id="CHEBI:140658"/>
        <dbReference type="EC" id="2.5.1.145"/>
    </reaction>
</comment>
<comment type="pathway">
    <text evidence="1">Protein modification; lipoprotein biosynthesis (diacylglyceryl transfer).</text>
</comment>
<comment type="subcellular location">
    <subcellularLocation>
        <location evidence="1">Cell membrane</location>
        <topology evidence="1">Multi-pass membrane protein</topology>
    </subcellularLocation>
</comment>
<comment type="similarity">
    <text evidence="1">Belongs to the Lgt family.</text>
</comment>
<feature type="chain" id="PRO_1000137464" description="Phosphatidylglycerol--prolipoprotein diacylglyceryl transferase">
    <location>
        <begin position="1"/>
        <end position="262"/>
    </location>
</feature>
<feature type="transmembrane region" description="Helical" evidence="1">
    <location>
        <begin position="9"/>
        <end position="29"/>
    </location>
</feature>
<feature type="transmembrane region" description="Helical" evidence="1">
    <location>
        <begin position="41"/>
        <end position="61"/>
    </location>
</feature>
<feature type="transmembrane region" description="Helical" evidence="1">
    <location>
        <begin position="80"/>
        <end position="100"/>
    </location>
</feature>
<feature type="transmembrane region" description="Helical" evidence="1">
    <location>
        <begin position="109"/>
        <end position="129"/>
    </location>
</feature>
<feature type="transmembrane region" description="Helical" evidence="1">
    <location>
        <begin position="167"/>
        <end position="187"/>
    </location>
</feature>
<feature type="transmembrane region" description="Helical" evidence="1">
    <location>
        <begin position="197"/>
        <end position="217"/>
    </location>
</feature>
<feature type="transmembrane region" description="Helical" evidence="1">
    <location>
        <begin position="226"/>
        <end position="246"/>
    </location>
</feature>
<feature type="binding site" evidence="1">
    <location>
        <position position="131"/>
    </location>
    <ligand>
        <name>a 1,2-diacyl-sn-glycero-3-phospho-(1'-sn-glycerol)</name>
        <dbReference type="ChEBI" id="CHEBI:64716"/>
    </ligand>
</feature>
<name>LGT_STRP4</name>
<organism>
    <name type="scientific">Streptococcus pneumoniae serotype 19F (strain G54)</name>
    <dbReference type="NCBI Taxonomy" id="512566"/>
    <lineage>
        <taxon>Bacteria</taxon>
        <taxon>Bacillati</taxon>
        <taxon>Bacillota</taxon>
        <taxon>Bacilli</taxon>
        <taxon>Lactobacillales</taxon>
        <taxon>Streptococcaceae</taxon>
        <taxon>Streptococcus</taxon>
    </lineage>
</organism>
<dbReference type="EC" id="2.5.1.145" evidence="1"/>
<dbReference type="EMBL" id="CP001015">
    <property type="protein sequence ID" value="ACF54877.1"/>
    <property type="molecule type" value="Genomic_DNA"/>
</dbReference>
<dbReference type="SMR" id="B5E5S0"/>
<dbReference type="KEGG" id="spx:SPG_1353"/>
<dbReference type="HOGENOM" id="CLU_013386_0_1_9"/>
<dbReference type="UniPathway" id="UPA00664"/>
<dbReference type="GO" id="GO:0005886">
    <property type="term" value="C:plasma membrane"/>
    <property type="evidence" value="ECO:0007669"/>
    <property type="project" value="UniProtKB-SubCell"/>
</dbReference>
<dbReference type="GO" id="GO:0008961">
    <property type="term" value="F:phosphatidylglycerol-prolipoprotein diacylglyceryl transferase activity"/>
    <property type="evidence" value="ECO:0007669"/>
    <property type="project" value="UniProtKB-UniRule"/>
</dbReference>
<dbReference type="GO" id="GO:0042158">
    <property type="term" value="P:lipoprotein biosynthetic process"/>
    <property type="evidence" value="ECO:0007669"/>
    <property type="project" value="UniProtKB-UniRule"/>
</dbReference>
<dbReference type="HAMAP" id="MF_01147">
    <property type="entry name" value="Lgt"/>
    <property type="match status" value="1"/>
</dbReference>
<dbReference type="InterPro" id="IPR001640">
    <property type="entry name" value="Lgt"/>
</dbReference>
<dbReference type="NCBIfam" id="TIGR00544">
    <property type="entry name" value="lgt"/>
    <property type="match status" value="1"/>
</dbReference>
<dbReference type="PANTHER" id="PTHR30589:SF0">
    <property type="entry name" value="PHOSPHATIDYLGLYCEROL--PROLIPOPROTEIN DIACYLGLYCERYL TRANSFERASE"/>
    <property type="match status" value="1"/>
</dbReference>
<dbReference type="PANTHER" id="PTHR30589">
    <property type="entry name" value="PROLIPOPROTEIN DIACYLGLYCERYL TRANSFERASE"/>
    <property type="match status" value="1"/>
</dbReference>
<dbReference type="Pfam" id="PF01790">
    <property type="entry name" value="LGT"/>
    <property type="match status" value="1"/>
</dbReference>
<dbReference type="PROSITE" id="PS01311">
    <property type="entry name" value="LGT"/>
    <property type="match status" value="1"/>
</dbReference>
<reference key="1">
    <citation type="journal article" date="2001" name="Microb. Drug Resist.">
        <title>Annotated draft genomic sequence from a Streptococcus pneumoniae type 19F clinical isolate.</title>
        <authorList>
            <person name="Dopazo J."/>
            <person name="Mendoza A."/>
            <person name="Herrero J."/>
            <person name="Caldara F."/>
            <person name="Humbert Y."/>
            <person name="Friedli L."/>
            <person name="Guerrier M."/>
            <person name="Grand-Schenk E."/>
            <person name="Gandin C."/>
            <person name="de Francesco M."/>
            <person name="Polissi A."/>
            <person name="Buell G."/>
            <person name="Feger G."/>
            <person name="Garcia E."/>
            <person name="Peitsch M."/>
            <person name="Garcia-Bustos J.F."/>
        </authorList>
    </citation>
    <scope>NUCLEOTIDE SEQUENCE [LARGE SCALE GENOMIC DNA]</scope>
    <source>
        <strain>G54</strain>
    </source>
</reference>
<reference key="2">
    <citation type="submission" date="2008-03" db="EMBL/GenBank/DDBJ databases">
        <title>Pneumococcal beta glucoside metabolism investigated by whole genome comparison.</title>
        <authorList>
            <person name="Mulas L."/>
            <person name="Trappetti C."/>
            <person name="Hakenbeck R."/>
            <person name="Iannelli F."/>
            <person name="Pozzi G."/>
            <person name="Davidsen T.M."/>
            <person name="Tettelin H."/>
            <person name="Oggioni M."/>
        </authorList>
    </citation>
    <scope>NUCLEOTIDE SEQUENCE [LARGE SCALE GENOMIC DNA]</scope>
    <source>
        <strain>G54</strain>
    </source>
</reference>
<evidence type="ECO:0000255" key="1">
    <source>
        <dbReference type="HAMAP-Rule" id="MF_01147"/>
    </source>
</evidence>